<proteinExistence type="inferred from homology"/>
<protein>
    <recommendedName>
        <fullName evidence="1">Large ribosomal subunit protein bL36</fullName>
    </recommendedName>
    <alternativeName>
        <fullName evidence="2">50S ribosomal protein L36</fullName>
    </alternativeName>
</protein>
<comment type="similarity">
    <text evidence="1">Belongs to the bacterial ribosomal protein bL36 family.</text>
</comment>
<sequence length="37" mass="4383">MKVRASVKKMCDKCKVIKRRGIVRVICENKKHKQRQG</sequence>
<name>RL36_ALIB4</name>
<keyword id="KW-1185">Reference proteome</keyword>
<keyword id="KW-0687">Ribonucleoprotein</keyword>
<keyword id="KW-0689">Ribosomal protein</keyword>
<gene>
    <name evidence="1" type="primary">rpmJ</name>
    <name type="ordered locus">Abu_1016</name>
</gene>
<reference key="1">
    <citation type="journal article" date="2007" name="PLoS ONE">
        <title>The complete genome sequence and analysis of the Epsilonproteobacterium Arcobacter butzleri.</title>
        <authorList>
            <person name="Miller W.G."/>
            <person name="Parker C.T."/>
            <person name="Rubenfield M."/>
            <person name="Mendz G.L."/>
            <person name="Woesten M.M.S.M."/>
            <person name="Ussery D.W."/>
            <person name="Stolz J.F."/>
            <person name="Binnewies T.T."/>
            <person name="Hallin P.F."/>
            <person name="Wang G."/>
            <person name="Malek J.A."/>
            <person name="Rogosin A."/>
            <person name="Stanker L.H."/>
            <person name="Mandrell R.E."/>
        </authorList>
    </citation>
    <scope>NUCLEOTIDE SEQUENCE [LARGE SCALE GENOMIC DNA]</scope>
    <source>
        <strain>RM4018</strain>
    </source>
</reference>
<dbReference type="EMBL" id="CP000361">
    <property type="protein sequence ID" value="ABV67276.1"/>
    <property type="molecule type" value="Genomic_DNA"/>
</dbReference>
<dbReference type="RefSeq" id="WP_004509205.1">
    <property type="nucleotide sequence ID" value="NC_009850.1"/>
</dbReference>
<dbReference type="SMR" id="A8ETK2"/>
<dbReference type="STRING" id="367737.Abu_1016"/>
<dbReference type="GeneID" id="56461024"/>
<dbReference type="KEGG" id="abu:Abu_1016"/>
<dbReference type="eggNOG" id="COG0257">
    <property type="taxonomic scope" value="Bacteria"/>
</dbReference>
<dbReference type="HOGENOM" id="CLU_135723_6_2_7"/>
<dbReference type="Proteomes" id="UP000001136">
    <property type="component" value="Chromosome"/>
</dbReference>
<dbReference type="GO" id="GO:0005737">
    <property type="term" value="C:cytoplasm"/>
    <property type="evidence" value="ECO:0007669"/>
    <property type="project" value="UniProtKB-ARBA"/>
</dbReference>
<dbReference type="GO" id="GO:1990904">
    <property type="term" value="C:ribonucleoprotein complex"/>
    <property type="evidence" value="ECO:0007669"/>
    <property type="project" value="UniProtKB-KW"/>
</dbReference>
<dbReference type="GO" id="GO:0005840">
    <property type="term" value="C:ribosome"/>
    <property type="evidence" value="ECO:0007669"/>
    <property type="project" value="UniProtKB-KW"/>
</dbReference>
<dbReference type="GO" id="GO:0003735">
    <property type="term" value="F:structural constituent of ribosome"/>
    <property type="evidence" value="ECO:0007669"/>
    <property type="project" value="InterPro"/>
</dbReference>
<dbReference type="GO" id="GO:0006412">
    <property type="term" value="P:translation"/>
    <property type="evidence" value="ECO:0007669"/>
    <property type="project" value="UniProtKB-UniRule"/>
</dbReference>
<dbReference type="HAMAP" id="MF_00251">
    <property type="entry name" value="Ribosomal_bL36"/>
    <property type="match status" value="1"/>
</dbReference>
<dbReference type="InterPro" id="IPR000473">
    <property type="entry name" value="Ribosomal_bL36"/>
</dbReference>
<dbReference type="InterPro" id="IPR035977">
    <property type="entry name" value="Ribosomal_bL36_sp"/>
</dbReference>
<dbReference type="NCBIfam" id="TIGR01022">
    <property type="entry name" value="rpmJ_bact"/>
    <property type="match status" value="1"/>
</dbReference>
<dbReference type="PANTHER" id="PTHR42888">
    <property type="entry name" value="50S RIBOSOMAL PROTEIN L36, CHLOROPLASTIC"/>
    <property type="match status" value="1"/>
</dbReference>
<dbReference type="PANTHER" id="PTHR42888:SF1">
    <property type="entry name" value="LARGE RIBOSOMAL SUBUNIT PROTEIN BL36C"/>
    <property type="match status" value="1"/>
</dbReference>
<dbReference type="Pfam" id="PF00444">
    <property type="entry name" value="Ribosomal_L36"/>
    <property type="match status" value="1"/>
</dbReference>
<dbReference type="SUPFAM" id="SSF57840">
    <property type="entry name" value="Ribosomal protein L36"/>
    <property type="match status" value="1"/>
</dbReference>
<dbReference type="PROSITE" id="PS00828">
    <property type="entry name" value="RIBOSOMAL_L36"/>
    <property type="match status" value="1"/>
</dbReference>
<accession>A8ETK2</accession>
<feature type="chain" id="PRO_1000059032" description="Large ribosomal subunit protein bL36">
    <location>
        <begin position="1"/>
        <end position="37"/>
    </location>
</feature>
<organism>
    <name type="scientific">Aliarcobacter butzleri (strain RM4018)</name>
    <name type="common">Arcobacter butzleri</name>
    <dbReference type="NCBI Taxonomy" id="367737"/>
    <lineage>
        <taxon>Bacteria</taxon>
        <taxon>Pseudomonadati</taxon>
        <taxon>Campylobacterota</taxon>
        <taxon>Epsilonproteobacteria</taxon>
        <taxon>Campylobacterales</taxon>
        <taxon>Arcobacteraceae</taxon>
        <taxon>Aliarcobacter</taxon>
    </lineage>
</organism>
<evidence type="ECO:0000255" key="1">
    <source>
        <dbReference type="HAMAP-Rule" id="MF_00251"/>
    </source>
</evidence>
<evidence type="ECO:0000305" key="2"/>